<protein>
    <recommendedName>
        <fullName evidence="1">Bifunctional glutamine synthetase adenylyltransferase/adenylyl-removing enzyme</fullName>
    </recommendedName>
    <alternativeName>
        <fullName evidence="1">ATP:glutamine synthetase adenylyltransferase</fullName>
    </alternativeName>
    <alternativeName>
        <fullName evidence="1">ATase</fullName>
    </alternativeName>
    <domain>
        <recommendedName>
            <fullName evidence="1">Glutamine synthetase adenylyl-L-tyrosine phosphorylase</fullName>
            <ecNumber evidence="1">2.7.7.89</ecNumber>
        </recommendedName>
        <alternativeName>
            <fullName evidence="1">Adenylyl removase</fullName>
            <shortName evidence="1">AR</shortName>
            <shortName evidence="1">AT-N</shortName>
        </alternativeName>
    </domain>
    <domain>
        <recommendedName>
            <fullName evidence="1">Glutamine synthetase adenylyl transferase</fullName>
            <ecNumber evidence="1">2.7.7.42</ecNumber>
        </recommendedName>
        <alternativeName>
            <fullName evidence="1">Adenylyl transferase</fullName>
            <shortName evidence="1">AT</shortName>
            <shortName evidence="1">AT-C</shortName>
        </alternativeName>
    </domain>
</protein>
<proteinExistence type="inferred from homology"/>
<accession>B7LZK2</accession>
<gene>
    <name evidence="1" type="primary">glnE</name>
    <name type="ordered locus">ECIAI1_3200</name>
</gene>
<keyword id="KW-0067">ATP-binding</keyword>
<keyword id="KW-0460">Magnesium</keyword>
<keyword id="KW-0511">Multifunctional enzyme</keyword>
<keyword id="KW-0547">Nucleotide-binding</keyword>
<keyword id="KW-0548">Nucleotidyltransferase</keyword>
<keyword id="KW-0808">Transferase</keyword>
<feature type="chain" id="PRO_1000133900" description="Bifunctional glutamine synthetase adenylyltransferase/adenylyl-removing enzyme">
    <location>
        <begin position="1"/>
        <end position="946"/>
    </location>
</feature>
<feature type="region of interest" description="Adenylyl removase" evidence="1">
    <location>
        <begin position="1"/>
        <end position="440"/>
    </location>
</feature>
<feature type="region of interest" description="Adenylyl transferase" evidence="1">
    <location>
        <begin position="449"/>
        <end position="946"/>
    </location>
</feature>
<dbReference type="EC" id="2.7.7.89" evidence="1"/>
<dbReference type="EC" id="2.7.7.42" evidence="1"/>
<dbReference type="EMBL" id="CU928160">
    <property type="protein sequence ID" value="CAR00014.1"/>
    <property type="molecule type" value="Genomic_DNA"/>
</dbReference>
<dbReference type="RefSeq" id="WP_001365952.1">
    <property type="nucleotide sequence ID" value="NC_011741.1"/>
</dbReference>
<dbReference type="SMR" id="B7LZK2"/>
<dbReference type="KEGG" id="ecr:ECIAI1_3200"/>
<dbReference type="HOGENOM" id="CLU_006233_0_1_6"/>
<dbReference type="GO" id="GO:0005829">
    <property type="term" value="C:cytosol"/>
    <property type="evidence" value="ECO:0007669"/>
    <property type="project" value="TreeGrafter"/>
</dbReference>
<dbReference type="GO" id="GO:0008882">
    <property type="term" value="F:[glutamate-ammonia-ligase] adenylyltransferase activity"/>
    <property type="evidence" value="ECO:0007669"/>
    <property type="project" value="UniProtKB-UniRule"/>
</dbReference>
<dbReference type="GO" id="GO:0047388">
    <property type="term" value="F:[glutamine synthetase]-adenylyl-L-tyrosine phosphorylase activity"/>
    <property type="evidence" value="ECO:0007669"/>
    <property type="project" value="UniProtKB-EC"/>
</dbReference>
<dbReference type="GO" id="GO:0005524">
    <property type="term" value="F:ATP binding"/>
    <property type="evidence" value="ECO:0007669"/>
    <property type="project" value="UniProtKB-UniRule"/>
</dbReference>
<dbReference type="GO" id="GO:0000287">
    <property type="term" value="F:magnesium ion binding"/>
    <property type="evidence" value="ECO:0007669"/>
    <property type="project" value="UniProtKB-UniRule"/>
</dbReference>
<dbReference type="GO" id="GO:0000820">
    <property type="term" value="P:regulation of glutamine family amino acid metabolic process"/>
    <property type="evidence" value="ECO:0007669"/>
    <property type="project" value="UniProtKB-UniRule"/>
</dbReference>
<dbReference type="CDD" id="cd05401">
    <property type="entry name" value="NT_GlnE_GlnD_like"/>
    <property type="match status" value="2"/>
</dbReference>
<dbReference type="FunFam" id="1.10.4050.10:FF:000001">
    <property type="entry name" value="Bifunctional glutamine synthetase adenylyltransferase/adenylyl-removing enzyme"/>
    <property type="match status" value="1"/>
</dbReference>
<dbReference type="FunFam" id="1.20.120.1510:FF:000001">
    <property type="entry name" value="Bifunctional glutamine synthetase adenylyltransferase/adenylyl-removing enzyme"/>
    <property type="match status" value="1"/>
</dbReference>
<dbReference type="FunFam" id="1.20.120.330:FF:000005">
    <property type="entry name" value="Bifunctional glutamine synthetase adenylyltransferase/adenylyl-removing enzyme"/>
    <property type="match status" value="1"/>
</dbReference>
<dbReference type="FunFam" id="1.20.120.330:FF:000008">
    <property type="entry name" value="Bifunctional glutamine synthetase adenylyltransferase/adenylyl-removing enzyme"/>
    <property type="match status" value="1"/>
</dbReference>
<dbReference type="FunFam" id="3.30.460.10:FF:000009">
    <property type="entry name" value="Bifunctional glutamine synthetase adenylyltransferase/adenylyl-removing enzyme"/>
    <property type="match status" value="1"/>
</dbReference>
<dbReference type="FunFam" id="3.30.460.10:FF:000014">
    <property type="entry name" value="Bifunctional glutamine synthetase adenylyltransferase/adenylyl-removing enzyme"/>
    <property type="match status" value="1"/>
</dbReference>
<dbReference type="Gene3D" id="1.20.120.1510">
    <property type="match status" value="1"/>
</dbReference>
<dbReference type="Gene3D" id="3.30.460.10">
    <property type="entry name" value="Beta Polymerase, domain 2"/>
    <property type="match status" value="2"/>
</dbReference>
<dbReference type="Gene3D" id="1.10.4050.10">
    <property type="entry name" value="Glutamine synthase adenylyltransferase GlnE"/>
    <property type="match status" value="1"/>
</dbReference>
<dbReference type="Gene3D" id="1.20.120.330">
    <property type="entry name" value="Nucleotidyltransferases domain 2"/>
    <property type="match status" value="2"/>
</dbReference>
<dbReference type="HAMAP" id="MF_00802">
    <property type="entry name" value="GlnE"/>
    <property type="match status" value="1"/>
</dbReference>
<dbReference type="InterPro" id="IPR023057">
    <property type="entry name" value="GlnE"/>
</dbReference>
<dbReference type="InterPro" id="IPR005190">
    <property type="entry name" value="GlnE_rpt_dom"/>
</dbReference>
<dbReference type="InterPro" id="IPR043519">
    <property type="entry name" value="NT_sf"/>
</dbReference>
<dbReference type="InterPro" id="IPR013546">
    <property type="entry name" value="PII_UdlTrfase/GS_AdlTrfase"/>
</dbReference>
<dbReference type="NCBIfam" id="NF008292">
    <property type="entry name" value="PRK11072.1"/>
    <property type="match status" value="1"/>
</dbReference>
<dbReference type="PANTHER" id="PTHR30621:SF0">
    <property type="entry name" value="BIFUNCTIONAL GLUTAMINE SYNTHETASE ADENYLYLTRANSFERASE_ADENYLYL-REMOVING ENZYME"/>
    <property type="match status" value="1"/>
</dbReference>
<dbReference type="PANTHER" id="PTHR30621">
    <property type="entry name" value="GLUTAMINE SYNTHETASE ADENYLYLTRANSFERASE"/>
    <property type="match status" value="1"/>
</dbReference>
<dbReference type="Pfam" id="PF08335">
    <property type="entry name" value="GlnD_UR_UTase"/>
    <property type="match status" value="2"/>
</dbReference>
<dbReference type="Pfam" id="PF03710">
    <property type="entry name" value="GlnE"/>
    <property type="match status" value="2"/>
</dbReference>
<dbReference type="SUPFAM" id="SSF81301">
    <property type="entry name" value="Nucleotidyltransferase"/>
    <property type="match status" value="2"/>
</dbReference>
<dbReference type="SUPFAM" id="SSF81593">
    <property type="entry name" value="Nucleotidyltransferase substrate binding subunit/domain"/>
    <property type="match status" value="2"/>
</dbReference>
<evidence type="ECO:0000255" key="1">
    <source>
        <dbReference type="HAMAP-Rule" id="MF_00802"/>
    </source>
</evidence>
<organism>
    <name type="scientific">Escherichia coli O8 (strain IAI1)</name>
    <dbReference type="NCBI Taxonomy" id="585034"/>
    <lineage>
        <taxon>Bacteria</taxon>
        <taxon>Pseudomonadati</taxon>
        <taxon>Pseudomonadota</taxon>
        <taxon>Gammaproteobacteria</taxon>
        <taxon>Enterobacterales</taxon>
        <taxon>Enterobacteriaceae</taxon>
        <taxon>Escherichia</taxon>
    </lineage>
</organism>
<sequence>MKPLSSPLQQYWQTVVERLPEPLAEKSLSAQAKSVLTFSDFVQDSVIAHPEWLTELESQSPQADEWQHYAAWLQEALSNVSDEAGLMRELRLFRRRIMVRIAWAQTLALVTEESILQQLSHLAETLIVAARDWLYDACCREWGTPCNAQGEAQPLLILGMGKLGGGELNFSSDIDLIFAWPEHGCTQGGRRELDNAQFFTRMGQRLIKVLDQPTQDGFVYRVDMRLRPFGESGPLVLSFAALEDYYQEQGRDWERYAMVKARIMGDSEGVYANELRAMLRPFVFRRYIDFSVIQSLRNMKGMIAREVRRRGLTDNIKLGAGGIREIEFIVQVFQLIRGGREPSLQSRSLLPTLSAIAALHLLSENDAEQLRVAYLFLRRLENLLQSINDEQTQTLPSDELNRARLAWAMDFADWPQLTGALTAHMTNVRRVFNELIGDDESETQEESLSEQWRELWQDALQEDDTTPVLAHLSEDDRKQVLTLIADFRKELDKRTIGPRGRQVLDHLMPHLLSDVCAREDAAVTLSRITALLVGIVTRTTYLELLSEFRAALKHLISLCAASPMIASQLARYPLLLDELLDPNTLYQPTATDAYRDELRQYLLRVPEDDEEQQLEALRQFKQAQLLRIAAADIAGTLPVMKVSDHLTWLAEAMIDAVVQQAWVQMVARYGKPNHLNDREGRGFAVVGYGKLGGWELGYSSDLDLIFLHDCPMDAMTDGEREIDGRQFYLRLAQRIMHLFSTRTSSGILYEVDARLRPSGAAGMLVTSAEAFADYQKNEAWTWEHQALVRARVVYGDPQLTAHFDAVRREIMTLPREGKTLQTEVREMREKMRAHLGNKHRNRFDIKADEGGITDIEFITQYLVLRYAHEKPKLTRWSDNVRILELLAQNDIMEEQEAMALTRAYTTLRDELHHLALQELPGHVPEDCFTAERELVRASWQKWLVEE</sequence>
<name>GLNE_ECO8A</name>
<reference key="1">
    <citation type="journal article" date="2009" name="PLoS Genet.">
        <title>Organised genome dynamics in the Escherichia coli species results in highly diverse adaptive paths.</title>
        <authorList>
            <person name="Touchon M."/>
            <person name="Hoede C."/>
            <person name="Tenaillon O."/>
            <person name="Barbe V."/>
            <person name="Baeriswyl S."/>
            <person name="Bidet P."/>
            <person name="Bingen E."/>
            <person name="Bonacorsi S."/>
            <person name="Bouchier C."/>
            <person name="Bouvet O."/>
            <person name="Calteau A."/>
            <person name="Chiapello H."/>
            <person name="Clermont O."/>
            <person name="Cruveiller S."/>
            <person name="Danchin A."/>
            <person name="Diard M."/>
            <person name="Dossat C."/>
            <person name="Karoui M.E."/>
            <person name="Frapy E."/>
            <person name="Garry L."/>
            <person name="Ghigo J.M."/>
            <person name="Gilles A.M."/>
            <person name="Johnson J."/>
            <person name="Le Bouguenec C."/>
            <person name="Lescat M."/>
            <person name="Mangenot S."/>
            <person name="Martinez-Jehanne V."/>
            <person name="Matic I."/>
            <person name="Nassif X."/>
            <person name="Oztas S."/>
            <person name="Petit M.A."/>
            <person name="Pichon C."/>
            <person name="Rouy Z."/>
            <person name="Ruf C.S."/>
            <person name="Schneider D."/>
            <person name="Tourret J."/>
            <person name="Vacherie B."/>
            <person name="Vallenet D."/>
            <person name="Medigue C."/>
            <person name="Rocha E.P.C."/>
            <person name="Denamur E."/>
        </authorList>
    </citation>
    <scope>NUCLEOTIDE SEQUENCE [LARGE SCALE GENOMIC DNA]</scope>
    <source>
        <strain>IAI1</strain>
    </source>
</reference>
<comment type="function">
    <text evidence="1">Involved in the regulation of glutamine synthetase GlnA, a key enzyme in the process to assimilate ammonia. When cellular nitrogen levels are high, the C-terminal adenylyl transferase (AT) inactivates GlnA by covalent transfer of an adenylyl group from ATP to specific tyrosine residue of GlnA, thus reducing its activity. Conversely, when nitrogen levels are low, the N-terminal adenylyl removase (AR) activates GlnA by removing the adenylyl group by phosphorolysis, increasing its activity. The regulatory region of GlnE binds the signal transduction protein PII (GlnB) which indicates the nitrogen status of the cell.</text>
</comment>
<comment type="catalytic activity">
    <reaction evidence="1">
        <text>[glutamine synthetase]-O(4)-(5'-adenylyl)-L-tyrosine + phosphate = [glutamine synthetase]-L-tyrosine + ADP</text>
        <dbReference type="Rhea" id="RHEA:43716"/>
        <dbReference type="Rhea" id="RHEA-COMP:10660"/>
        <dbReference type="Rhea" id="RHEA-COMP:10661"/>
        <dbReference type="ChEBI" id="CHEBI:43474"/>
        <dbReference type="ChEBI" id="CHEBI:46858"/>
        <dbReference type="ChEBI" id="CHEBI:83624"/>
        <dbReference type="ChEBI" id="CHEBI:456216"/>
        <dbReference type="EC" id="2.7.7.89"/>
    </reaction>
</comment>
<comment type="catalytic activity">
    <reaction evidence="1">
        <text>[glutamine synthetase]-L-tyrosine + ATP = [glutamine synthetase]-O(4)-(5'-adenylyl)-L-tyrosine + diphosphate</text>
        <dbReference type="Rhea" id="RHEA:18589"/>
        <dbReference type="Rhea" id="RHEA-COMP:10660"/>
        <dbReference type="Rhea" id="RHEA-COMP:10661"/>
        <dbReference type="ChEBI" id="CHEBI:30616"/>
        <dbReference type="ChEBI" id="CHEBI:33019"/>
        <dbReference type="ChEBI" id="CHEBI:46858"/>
        <dbReference type="ChEBI" id="CHEBI:83624"/>
        <dbReference type="EC" id="2.7.7.42"/>
    </reaction>
</comment>
<comment type="cofactor">
    <cofactor evidence="1">
        <name>Mg(2+)</name>
        <dbReference type="ChEBI" id="CHEBI:18420"/>
    </cofactor>
</comment>
<comment type="similarity">
    <text evidence="1">Belongs to the GlnE family.</text>
</comment>